<sequence>MQAIPMTLRGAEKLREELDFLKSVRRPEIIAAIAEAREHGDLKENAEYHAAREQQGFCEGRIKDIEAKLSNAQVIDVTKMPNNGRVIFGATVTVLNLDTDEEQTYRIVGDDEADFKQNLISVNSPIARGLIGKEQDDVVVIKTPGGDVEYEVLKVEYL</sequence>
<protein>
    <recommendedName>
        <fullName evidence="1">Transcription elongation factor GreA</fullName>
    </recommendedName>
    <alternativeName>
        <fullName evidence="1">Transcript cleavage factor GreA</fullName>
    </alternativeName>
</protein>
<proteinExistence type="inferred from homology"/>
<evidence type="ECO:0000255" key="1">
    <source>
        <dbReference type="HAMAP-Rule" id="MF_00105"/>
    </source>
</evidence>
<keyword id="KW-0238">DNA-binding</keyword>
<keyword id="KW-0804">Transcription</keyword>
<keyword id="KW-0805">Transcription regulation</keyword>
<name>GREA_SALTI</name>
<dbReference type="EMBL" id="AL513382">
    <property type="protein sequence ID" value="CAD07816.1"/>
    <property type="molecule type" value="Genomic_DNA"/>
</dbReference>
<dbReference type="EMBL" id="AE014613">
    <property type="protein sequence ID" value="AAO70752.1"/>
    <property type="molecule type" value="Genomic_DNA"/>
</dbReference>
<dbReference type="RefSeq" id="NP_457678.1">
    <property type="nucleotide sequence ID" value="NC_003198.1"/>
</dbReference>
<dbReference type="RefSeq" id="WP_001148008.1">
    <property type="nucleotide sequence ID" value="NZ_WSUR01000003.1"/>
</dbReference>
<dbReference type="SMR" id="P64282"/>
<dbReference type="STRING" id="220341.gene:17587329"/>
<dbReference type="GeneID" id="66757638"/>
<dbReference type="KEGG" id="stt:t3216"/>
<dbReference type="KEGG" id="sty:STY3477"/>
<dbReference type="PATRIC" id="fig|220341.7.peg.3540"/>
<dbReference type="eggNOG" id="COG0782">
    <property type="taxonomic scope" value="Bacteria"/>
</dbReference>
<dbReference type="HOGENOM" id="CLU_101379_2_0_6"/>
<dbReference type="OMA" id="TWLTQEA"/>
<dbReference type="OrthoDB" id="9808774at2"/>
<dbReference type="Proteomes" id="UP000000541">
    <property type="component" value="Chromosome"/>
</dbReference>
<dbReference type="Proteomes" id="UP000002670">
    <property type="component" value="Chromosome"/>
</dbReference>
<dbReference type="GO" id="GO:0003677">
    <property type="term" value="F:DNA binding"/>
    <property type="evidence" value="ECO:0007669"/>
    <property type="project" value="UniProtKB-UniRule"/>
</dbReference>
<dbReference type="GO" id="GO:0070063">
    <property type="term" value="F:RNA polymerase binding"/>
    <property type="evidence" value="ECO:0007669"/>
    <property type="project" value="InterPro"/>
</dbReference>
<dbReference type="GO" id="GO:0006354">
    <property type="term" value="P:DNA-templated transcription elongation"/>
    <property type="evidence" value="ECO:0007669"/>
    <property type="project" value="TreeGrafter"/>
</dbReference>
<dbReference type="GO" id="GO:0032784">
    <property type="term" value="P:regulation of DNA-templated transcription elongation"/>
    <property type="evidence" value="ECO:0007669"/>
    <property type="project" value="UniProtKB-UniRule"/>
</dbReference>
<dbReference type="FunFam" id="1.10.287.180:FF:000001">
    <property type="entry name" value="Transcription elongation factor GreA"/>
    <property type="match status" value="1"/>
</dbReference>
<dbReference type="FunFam" id="3.10.50.30:FF:000001">
    <property type="entry name" value="Transcription elongation factor GreA"/>
    <property type="match status" value="1"/>
</dbReference>
<dbReference type="Gene3D" id="3.10.50.30">
    <property type="entry name" value="Transcription elongation factor, GreA/GreB, C-terminal domain"/>
    <property type="match status" value="1"/>
</dbReference>
<dbReference type="Gene3D" id="1.10.287.180">
    <property type="entry name" value="Transcription elongation factor, GreA/GreB, N-terminal domain"/>
    <property type="match status" value="1"/>
</dbReference>
<dbReference type="HAMAP" id="MF_00105">
    <property type="entry name" value="GreA_GreB"/>
    <property type="match status" value="1"/>
</dbReference>
<dbReference type="InterPro" id="IPR036953">
    <property type="entry name" value="GreA/GreB_C_sf"/>
</dbReference>
<dbReference type="InterPro" id="IPR018151">
    <property type="entry name" value="TF_GreA/GreB_CS"/>
</dbReference>
<dbReference type="InterPro" id="IPR006359">
    <property type="entry name" value="Tscrpt_elong_fac_GreA"/>
</dbReference>
<dbReference type="InterPro" id="IPR028624">
    <property type="entry name" value="Tscrpt_elong_fac_GreA/B"/>
</dbReference>
<dbReference type="InterPro" id="IPR001437">
    <property type="entry name" value="Tscrpt_elong_fac_GreA/B_C"/>
</dbReference>
<dbReference type="InterPro" id="IPR023459">
    <property type="entry name" value="Tscrpt_elong_fac_GreA/B_fam"/>
</dbReference>
<dbReference type="InterPro" id="IPR022691">
    <property type="entry name" value="Tscrpt_elong_fac_GreA/B_N"/>
</dbReference>
<dbReference type="InterPro" id="IPR036805">
    <property type="entry name" value="Tscrpt_elong_fac_GreA/B_N_sf"/>
</dbReference>
<dbReference type="NCBIfam" id="TIGR01462">
    <property type="entry name" value="greA"/>
    <property type="match status" value="1"/>
</dbReference>
<dbReference type="NCBIfam" id="NF001261">
    <property type="entry name" value="PRK00226.1-2"/>
    <property type="match status" value="1"/>
</dbReference>
<dbReference type="NCBIfam" id="NF001263">
    <property type="entry name" value="PRK00226.1-4"/>
    <property type="match status" value="1"/>
</dbReference>
<dbReference type="NCBIfam" id="NF001264">
    <property type="entry name" value="PRK00226.1-5"/>
    <property type="match status" value="1"/>
</dbReference>
<dbReference type="PANTHER" id="PTHR30437">
    <property type="entry name" value="TRANSCRIPTION ELONGATION FACTOR GREA"/>
    <property type="match status" value="1"/>
</dbReference>
<dbReference type="PANTHER" id="PTHR30437:SF4">
    <property type="entry name" value="TRANSCRIPTION ELONGATION FACTOR GREA"/>
    <property type="match status" value="1"/>
</dbReference>
<dbReference type="Pfam" id="PF01272">
    <property type="entry name" value="GreA_GreB"/>
    <property type="match status" value="1"/>
</dbReference>
<dbReference type="Pfam" id="PF03449">
    <property type="entry name" value="GreA_GreB_N"/>
    <property type="match status" value="1"/>
</dbReference>
<dbReference type="PIRSF" id="PIRSF006092">
    <property type="entry name" value="GreA_GreB"/>
    <property type="match status" value="1"/>
</dbReference>
<dbReference type="SUPFAM" id="SSF54534">
    <property type="entry name" value="FKBP-like"/>
    <property type="match status" value="1"/>
</dbReference>
<dbReference type="SUPFAM" id="SSF46557">
    <property type="entry name" value="GreA transcript cleavage protein, N-terminal domain"/>
    <property type="match status" value="1"/>
</dbReference>
<dbReference type="PROSITE" id="PS00829">
    <property type="entry name" value="GREAB_1"/>
    <property type="match status" value="1"/>
</dbReference>
<dbReference type="PROSITE" id="PS00830">
    <property type="entry name" value="GREAB_2"/>
    <property type="match status" value="1"/>
</dbReference>
<feature type="chain" id="PRO_0000176966" description="Transcription elongation factor GreA">
    <location>
        <begin position="1"/>
        <end position="158"/>
    </location>
</feature>
<accession>P64282</accession>
<accession>Q8XGQ9</accession>
<reference key="1">
    <citation type="journal article" date="2001" name="Nature">
        <title>Complete genome sequence of a multiple drug resistant Salmonella enterica serovar Typhi CT18.</title>
        <authorList>
            <person name="Parkhill J."/>
            <person name="Dougan G."/>
            <person name="James K.D."/>
            <person name="Thomson N.R."/>
            <person name="Pickard D."/>
            <person name="Wain J."/>
            <person name="Churcher C.M."/>
            <person name="Mungall K.L."/>
            <person name="Bentley S.D."/>
            <person name="Holden M.T.G."/>
            <person name="Sebaihia M."/>
            <person name="Baker S."/>
            <person name="Basham D."/>
            <person name="Brooks K."/>
            <person name="Chillingworth T."/>
            <person name="Connerton P."/>
            <person name="Cronin A."/>
            <person name="Davis P."/>
            <person name="Davies R.M."/>
            <person name="Dowd L."/>
            <person name="White N."/>
            <person name="Farrar J."/>
            <person name="Feltwell T."/>
            <person name="Hamlin N."/>
            <person name="Haque A."/>
            <person name="Hien T.T."/>
            <person name="Holroyd S."/>
            <person name="Jagels K."/>
            <person name="Krogh A."/>
            <person name="Larsen T.S."/>
            <person name="Leather S."/>
            <person name="Moule S."/>
            <person name="O'Gaora P."/>
            <person name="Parry C."/>
            <person name="Quail M.A."/>
            <person name="Rutherford K.M."/>
            <person name="Simmonds M."/>
            <person name="Skelton J."/>
            <person name="Stevens K."/>
            <person name="Whitehead S."/>
            <person name="Barrell B.G."/>
        </authorList>
    </citation>
    <scope>NUCLEOTIDE SEQUENCE [LARGE SCALE GENOMIC DNA]</scope>
    <source>
        <strain>CT18</strain>
    </source>
</reference>
<reference key="2">
    <citation type="journal article" date="2003" name="J. Bacteriol.">
        <title>Comparative genomics of Salmonella enterica serovar Typhi strains Ty2 and CT18.</title>
        <authorList>
            <person name="Deng W."/>
            <person name="Liou S.-R."/>
            <person name="Plunkett G. III"/>
            <person name="Mayhew G.F."/>
            <person name="Rose D.J."/>
            <person name="Burland V."/>
            <person name="Kodoyianni V."/>
            <person name="Schwartz D.C."/>
            <person name="Blattner F.R."/>
        </authorList>
    </citation>
    <scope>NUCLEOTIDE SEQUENCE [LARGE SCALE GENOMIC DNA]</scope>
    <source>
        <strain>ATCC 700931 / Ty2</strain>
    </source>
</reference>
<organism>
    <name type="scientific">Salmonella typhi</name>
    <dbReference type="NCBI Taxonomy" id="90370"/>
    <lineage>
        <taxon>Bacteria</taxon>
        <taxon>Pseudomonadati</taxon>
        <taxon>Pseudomonadota</taxon>
        <taxon>Gammaproteobacteria</taxon>
        <taxon>Enterobacterales</taxon>
        <taxon>Enterobacteriaceae</taxon>
        <taxon>Salmonella</taxon>
    </lineage>
</organism>
<comment type="function">
    <text evidence="1">Necessary for efficient RNA polymerase transcription elongation past template-encoded arresting sites. The arresting sites in DNA have the property of trapping a certain fraction of elongating RNA polymerases that pass through, resulting in locked ternary complexes. Cleavage of the nascent transcript by cleavage factors such as GreA or GreB allows the resumption of elongation from the new 3'terminus. GreA releases sequences of 2 to 3 nucleotides.</text>
</comment>
<comment type="similarity">
    <text evidence="1">Belongs to the GreA/GreB family.</text>
</comment>
<gene>
    <name evidence="1" type="primary">greA</name>
    <name type="ordered locus">STY3477</name>
    <name type="ordered locus">t3216</name>
</gene>